<dbReference type="EMBL" id="M33226">
    <property type="protein sequence ID" value="AAA18201.1"/>
    <property type="molecule type" value="mRNA"/>
</dbReference>
<dbReference type="CCDS" id="CCDS40271.1"/>
<dbReference type="PIR" id="B53701">
    <property type="entry name" value="B53701"/>
</dbReference>
<dbReference type="FunCoup" id="P17533">
    <property type="interactions" value="20"/>
</dbReference>
<dbReference type="STRING" id="10090.ENSMUSP00000096489"/>
<dbReference type="GlyGen" id="P17533">
    <property type="glycosylation" value="1 site"/>
</dbReference>
<dbReference type="PaxDb" id="10090-ENSMUSP00000096489"/>
<dbReference type="PeptideAtlas" id="P17533"/>
<dbReference type="ProteomicsDB" id="277316"/>
<dbReference type="AGR" id="MGI:94881"/>
<dbReference type="MGI" id="MGI:94881">
    <property type="gene designation" value="Defa29"/>
</dbReference>
<dbReference type="eggNOG" id="ENOG502TF4X">
    <property type="taxonomic scope" value="Eukaryota"/>
</dbReference>
<dbReference type="InParanoid" id="P17533"/>
<dbReference type="PhylomeDB" id="P17533"/>
<dbReference type="Reactome" id="R-MMU-1461973">
    <property type="pathway name" value="Defensins"/>
</dbReference>
<dbReference type="Reactome" id="R-MMU-1462054">
    <property type="pathway name" value="Alpha-defensins"/>
</dbReference>
<dbReference type="Reactome" id="R-MMU-6798695">
    <property type="pathway name" value="Neutrophil degranulation"/>
</dbReference>
<dbReference type="PRO" id="PR:P17533"/>
<dbReference type="Proteomes" id="UP000000589">
    <property type="component" value="Unplaced"/>
</dbReference>
<dbReference type="RNAct" id="P17533">
    <property type="molecule type" value="protein"/>
</dbReference>
<dbReference type="GO" id="GO:0005615">
    <property type="term" value="C:extracellular space"/>
    <property type="evidence" value="ECO:0007669"/>
    <property type="project" value="InterPro"/>
</dbReference>
<dbReference type="GO" id="GO:0042742">
    <property type="term" value="P:defense response to bacterium"/>
    <property type="evidence" value="ECO:0007669"/>
    <property type="project" value="UniProtKB-ARBA"/>
</dbReference>
<dbReference type="InterPro" id="IPR016327">
    <property type="entry name" value="Alpha-defensin"/>
</dbReference>
<dbReference type="InterPro" id="IPR002366">
    <property type="entry name" value="Alpha-defensin_N"/>
</dbReference>
<dbReference type="PANTHER" id="PTHR11876">
    <property type="entry name" value="ALPHA-DEFENSIN 1"/>
    <property type="match status" value="1"/>
</dbReference>
<dbReference type="PANTHER" id="PTHR11876:SF2">
    <property type="entry name" value="ALPHA-DEFENSIN 1-RELATED"/>
    <property type="match status" value="1"/>
</dbReference>
<dbReference type="Pfam" id="PF00879">
    <property type="entry name" value="Defensin_propep"/>
    <property type="match status" value="1"/>
</dbReference>
<dbReference type="PIRSF" id="PIRSF001875">
    <property type="entry name" value="Alpha-defensin"/>
    <property type="match status" value="1"/>
</dbReference>
<dbReference type="SMART" id="SM01418">
    <property type="entry name" value="Defensin_propep"/>
    <property type="match status" value="1"/>
</dbReference>
<name>DFA29_MOUSE</name>
<proteinExistence type="evidence at transcript level"/>
<reference key="1">
    <citation type="journal article" date="1990" name="J. Biol. Chem.">
        <title>A novel mouse gene family coding for cationic, cysteine-rich peptides. Regulation in small intestine and cells of myeloid origin.</title>
        <authorList>
            <person name="Ouellette A.J."/>
            <person name="Lauldi J.C."/>
        </authorList>
    </citation>
    <scope>NUCLEOTIDE SEQUENCE [MRNA]</scope>
    <scope>FUNCTION</scope>
    <scope>TISSUE SPECIFICITY</scope>
    <scope>DEVELOPMENTAL STAGE</scope>
    <source>
        <strain>CD-1</strain>
        <tissue>Small intestine</tissue>
    </source>
</reference>
<reference key="2">
    <citation type="journal article" date="1994" name="J. Biol. Chem.">
        <authorList>
            <person name="Ouellette A.J."/>
            <person name="Lauldi J.C."/>
        </authorList>
    </citation>
    <scope>ERRATUM OF PUBMED:2351676</scope>
    <scope>SEQUENCE REVISION</scope>
</reference>
<keyword id="KW-0929">Antimicrobial</keyword>
<keyword id="KW-0211">Defensin</keyword>
<keyword id="KW-1185">Reference proteome</keyword>
<keyword id="KW-0677">Repeat</keyword>
<keyword id="KW-0964">Secreted</keyword>
<keyword id="KW-0732">Signal</keyword>
<protein>
    <recommendedName>
        <fullName evidence="5">Alpha-defensin 29</fullName>
    </recommendedName>
    <alternativeName>
        <fullName evidence="6">Alpha-defensin-related sequence 1</fullName>
    </alternativeName>
    <alternativeName>
        <fullName evidence="6">CRS1C</fullName>
    </alternativeName>
    <alternativeName>
        <fullName evidence="4">Cryptdin-related protein 1C</fullName>
    </alternativeName>
    <alternativeName>
        <fullName>Defensin-related cryptdin-related sequence 1</fullName>
    </alternativeName>
</protein>
<feature type="signal peptide" evidence="1">
    <location>
        <begin position="1"/>
        <end position="19"/>
    </location>
</feature>
<feature type="propeptide" id="PRO_0000006849" evidence="1">
    <location>
        <begin position="20"/>
        <end position="60"/>
    </location>
</feature>
<feature type="chain" id="PRO_0000006850" description="Alpha-defensin 29">
    <location>
        <begin position="61"/>
        <end position="116"/>
    </location>
</feature>
<feature type="repeat" description="1-1">
    <location>
        <begin position="65"/>
        <end position="67"/>
    </location>
</feature>
<feature type="repeat" description="1-2">
    <location>
        <begin position="68"/>
        <end position="70"/>
    </location>
</feature>
<feature type="repeat" description="2-1">
    <location>
        <begin position="71"/>
        <end position="73"/>
    </location>
</feature>
<feature type="repeat" description="2-2">
    <location>
        <begin position="74"/>
        <end position="76"/>
    </location>
</feature>
<feature type="repeat" description="2-3">
    <location>
        <begin position="77"/>
        <end position="79"/>
    </location>
</feature>
<feature type="repeat" description="3-1">
    <location>
        <begin position="80"/>
        <end position="82"/>
    </location>
</feature>
<feature type="repeat" description="3-2">
    <location>
        <begin position="83"/>
        <end position="85"/>
    </location>
</feature>
<feature type="repeat" description="3-3">
    <location>
        <begin position="86"/>
        <end position="88"/>
    </location>
</feature>
<feature type="repeat" description="3-4">
    <location>
        <begin position="89"/>
        <end position="91"/>
    </location>
</feature>
<feature type="region of interest" description="Disordered" evidence="2">
    <location>
        <begin position="22"/>
        <end position="44"/>
    </location>
</feature>
<feature type="region of interest" description="2 X 3 AA tandem repeats of C-R-X">
    <location>
        <begin position="65"/>
        <end position="70"/>
    </location>
</feature>
<feature type="region of interest" description="3 X 3 AA tandem repeats of C-Q-X">
    <location>
        <begin position="71"/>
        <end position="79"/>
    </location>
</feature>
<feature type="region of interest" description="4 X 3 AA tandem repeats of C-P-X">
    <location>
        <begin position="80"/>
        <end position="91"/>
    </location>
</feature>
<evidence type="ECO:0000255" key="1"/>
<evidence type="ECO:0000256" key="2">
    <source>
        <dbReference type="SAM" id="MobiDB-lite"/>
    </source>
</evidence>
<evidence type="ECO:0000269" key="3">
    <source>
    </source>
</evidence>
<evidence type="ECO:0000303" key="4">
    <source>
    </source>
</evidence>
<evidence type="ECO:0000305" key="5"/>
<evidence type="ECO:0000312" key="6">
    <source>
        <dbReference type="MGI" id="MGI:94881"/>
    </source>
</evidence>
<comment type="function">
    <text evidence="3">Apparent precursor of a secreted, cationic, proline- and cysteine-rich peptide that contains Cys-Pro-Xaa repeats (PubMed:2351676). Unlike cryptdin, the proposed mature peptide region lacks the structural motif characteristic of defensins (PubMed:2351676).</text>
</comment>
<comment type="subcellular location">
    <subcellularLocation>
        <location>Secreted</location>
    </subcellularLocation>
</comment>
<comment type="tissue specificity">
    <text evidence="3">Small bowel.</text>
</comment>
<comment type="developmental stage">
    <text evidence="3">Accumulates to high levels in intestinal crypt epithelium from 14 days of age to 40 days of age.</text>
</comment>
<comment type="similarity">
    <text evidence="5">Belongs to the alpha-defensin family.</text>
</comment>
<organism>
    <name type="scientific">Mus musculus</name>
    <name type="common">Mouse</name>
    <dbReference type="NCBI Taxonomy" id="10090"/>
    <lineage>
        <taxon>Eukaryota</taxon>
        <taxon>Metazoa</taxon>
        <taxon>Chordata</taxon>
        <taxon>Craniata</taxon>
        <taxon>Vertebrata</taxon>
        <taxon>Euteleostomi</taxon>
        <taxon>Mammalia</taxon>
        <taxon>Eutheria</taxon>
        <taxon>Euarchontoglires</taxon>
        <taxon>Glires</taxon>
        <taxon>Rodentia</taxon>
        <taxon>Myomorpha</taxon>
        <taxon>Muroidea</taxon>
        <taxon>Muridae</taxon>
        <taxon>Murinae</taxon>
        <taxon>Mus</taxon>
        <taxon>Mus</taxon>
    </lineage>
</organism>
<sequence>MKTLVLLSALVLPCFQVQADPIQNTDEETKTEEQPEEEDQAVSVSFGGTEGSALQDVAQRRFPWCRKCRVCQKCQVCQKCPVCPTCPQCPKQPLCEERQNKTAITTQAPNTQHKGC</sequence>
<accession>P17533</accession>
<accession>Q9QVW7</accession>
<gene>
    <name evidence="6" type="primary">Defa29</name>
    <name evidence="6" type="synonym">Defa-rs1</name>
    <name type="synonym">Defcr-rs1</name>
</gene>